<reference key="1">
    <citation type="journal article" date="2009" name="Stand. Genomic Sci.">
        <title>Complete genome sequence of Methanoculleus marisnigri Romesser et al. 1981 type strain JR1.</title>
        <authorList>
            <person name="Anderson I.J."/>
            <person name="Sieprawska-Lupa M."/>
            <person name="Lapidus A."/>
            <person name="Nolan M."/>
            <person name="Copeland A."/>
            <person name="Glavina Del Rio T."/>
            <person name="Tice H."/>
            <person name="Dalin E."/>
            <person name="Barry K."/>
            <person name="Saunders E."/>
            <person name="Han C."/>
            <person name="Brettin T."/>
            <person name="Detter J.C."/>
            <person name="Bruce D."/>
            <person name="Mikhailova N."/>
            <person name="Pitluck S."/>
            <person name="Hauser L."/>
            <person name="Land M."/>
            <person name="Lucas S."/>
            <person name="Richardson P."/>
            <person name="Whitman W.B."/>
            <person name="Kyrpides N.C."/>
        </authorList>
    </citation>
    <scope>NUCLEOTIDE SEQUENCE [LARGE SCALE GENOMIC DNA]</scope>
    <source>
        <strain>ATCC 35101 / DSM 1498 / JR1</strain>
    </source>
</reference>
<protein>
    <recommendedName>
        <fullName evidence="1">Phosphomethylpyrimidine synthase</fullName>
        <ecNumber evidence="1">4.1.99.17</ecNumber>
    </recommendedName>
    <alternativeName>
        <fullName evidence="1">Hydroxymethylpyrimidine phosphate synthase</fullName>
        <shortName evidence="1">HMP-P synthase</shortName>
        <shortName evidence="1">HMP-phosphate synthase</shortName>
        <shortName evidence="1">HMPP synthase</shortName>
    </alternativeName>
    <alternativeName>
        <fullName evidence="1">Thiamine biosynthesis protein ThiC</fullName>
    </alternativeName>
</protein>
<evidence type="ECO:0000255" key="1">
    <source>
        <dbReference type="HAMAP-Rule" id="MF_00089"/>
    </source>
</evidence>
<proteinExistence type="inferred from homology"/>
<accession>A3CVT7</accession>
<comment type="function">
    <text evidence="1">Catalyzes the synthesis of the hydroxymethylpyrimidine phosphate (HMP-P) moiety of thiamine from aminoimidazole ribotide (AIR) in a radical S-adenosyl-L-methionine (SAM)-dependent reaction.</text>
</comment>
<comment type="catalytic activity">
    <reaction evidence="1">
        <text>5-amino-1-(5-phospho-beta-D-ribosyl)imidazole + S-adenosyl-L-methionine = 4-amino-2-methyl-5-(phosphooxymethyl)pyrimidine + CO + 5'-deoxyadenosine + formate + L-methionine + 3 H(+)</text>
        <dbReference type="Rhea" id="RHEA:24840"/>
        <dbReference type="ChEBI" id="CHEBI:15378"/>
        <dbReference type="ChEBI" id="CHEBI:15740"/>
        <dbReference type="ChEBI" id="CHEBI:17245"/>
        <dbReference type="ChEBI" id="CHEBI:17319"/>
        <dbReference type="ChEBI" id="CHEBI:57844"/>
        <dbReference type="ChEBI" id="CHEBI:58354"/>
        <dbReference type="ChEBI" id="CHEBI:59789"/>
        <dbReference type="ChEBI" id="CHEBI:137981"/>
        <dbReference type="EC" id="4.1.99.17"/>
    </reaction>
</comment>
<comment type="cofactor">
    <cofactor evidence="1">
        <name>[4Fe-4S] cluster</name>
        <dbReference type="ChEBI" id="CHEBI:49883"/>
    </cofactor>
    <text evidence="1">Binds 1 [4Fe-4S] cluster per subunit. The cluster is coordinated with 3 cysteines and an exchangeable S-adenosyl-L-methionine.</text>
</comment>
<comment type="pathway">
    <text evidence="1">Cofactor biosynthesis; thiamine diphosphate biosynthesis.</text>
</comment>
<comment type="similarity">
    <text evidence="1">Belongs to the ThiC family.</text>
</comment>
<sequence>MSLIEDARRGVVTEEMRIVAAAEGVTEDFVRRGVAEGHIVIPVSPYRRVKICGIGEGLRTKVNASIGTSTDMVDVDMEVEKVRQAERAGADTLMELSTGGDFLEIRRRVVEATTLSVGSVPLYQAFIEAARKRGAVVHMEPDDLFRITAEQAKLGTNFMAIHTGINYETMKRLQNQGRHGGLVSRGGAFMTAWMLHNEKENPLYSEFDYLLEILKEHEVTLSFGNGMRAGAVHDATDRAQVQELLINAELADKAHEQGVQTIIEGPGHIPVDEIQTNVVLQKRVTNRRPFYMLGPLVTDIAPGYDDRVAAIGAALSSSYGADFICYVTPAEHLALPTPEEVYEGVMSSRIAAHVGDMIKLKKRDADLEMGHARRDLDWERQFAVAMNPERARAIRDERMPADTDGCTMCGDYCALKIVGRHFNF</sequence>
<name>THIC_METMJ</name>
<feature type="chain" id="PRO_1000004773" description="Phosphomethylpyrimidine synthase">
    <location>
        <begin position="1"/>
        <end position="424"/>
    </location>
</feature>
<feature type="binding site" evidence="1">
    <location>
        <position position="94"/>
    </location>
    <ligand>
        <name>substrate</name>
    </ligand>
</feature>
<feature type="binding site" evidence="1">
    <location>
        <position position="123"/>
    </location>
    <ligand>
        <name>substrate</name>
    </ligand>
</feature>
<feature type="binding site" evidence="1">
    <location>
        <position position="162"/>
    </location>
    <ligand>
        <name>substrate</name>
    </ligand>
</feature>
<feature type="binding site" evidence="1">
    <location>
        <begin position="184"/>
        <end position="186"/>
    </location>
    <ligand>
        <name>substrate</name>
    </ligand>
</feature>
<feature type="binding site" evidence="1">
    <location>
        <begin position="225"/>
        <end position="228"/>
    </location>
    <ligand>
        <name>substrate</name>
    </ligand>
</feature>
<feature type="binding site" evidence="1">
    <location>
        <position position="264"/>
    </location>
    <ligand>
        <name>substrate</name>
    </ligand>
</feature>
<feature type="binding site" evidence="1">
    <location>
        <position position="268"/>
    </location>
    <ligand>
        <name>Zn(2+)</name>
        <dbReference type="ChEBI" id="CHEBI:29105"/>
    </ligand>
</feature>
<feature type="binding site" evidence="1">
    <location>
        <position position="291"/>
    </location>
    <ligand>
        <name>substrate</name>
    </ligand>
</feature>
<feature type="binding site" evidence="1">
    <location>
        <position position="332"/>
    </location>
    <ligand>
        <name>Zn(2+)</name>
        <dbReference type="ChEBI" id="CHEBI:29105"/>
    </ligand>
</feature>
<feature type="binding site" evidence="1">
    <location>
        <position position="406"/>
    </location>
    <ligand>
        <name>[4Fe-4S] cluster</name>
        <dbReference type="ChEBI" id="CHEBI:49883"/>
        <note>4Fe-4S-S-AdoMet</note>
    </ligand>
</feature>
<feature type="binding site" evidence="1">
    <location>
        <position position="409"/>
    </location>
    <ligand>
        <name>[4Fe-4S] cluster</name>
        <dbReference type="ChEBI" id="CHEBI:49883"/>
        <note>4Fe-4S-S-AdoMet</note>
    </ligand>
</feature>
<feature type="binding site" evidence="1">
    <location>
        <position position="413"/>
    </location>
    <ligand>
        <name>[4Fe-4S] cluster</name>
        <dbReference type="ChEBI" id="CHEBI:49883"/>
        <note>4Fe-4S-S-AdoMet</note>
    </ligand>
</feature>
<keyword id="KW-0004">4Fe-4S</keyword>
<keyword id="KW-0408">Iron</keyword>
<keyword id="KW-0411">Iron-sulfur</keyword>
<keyword id="KW-0456">Lyase</keyword>
<keyword id="KW-0479">Metal-binding</keyword>
<keyword id="KW-0949">S-adenosyl-L-methionine</keyword>
<keyword id="KW-0784">Thiamine biosynthesis</keyword>
<keyword id="KW-0862">Zinc</keyword>
<dbReference type="EC" id="4.1.99.17" evidence="1"/>
<dbReference type="EMBL" id="CP000562">
    <property type="protein sequence ID" value="ABN57487.1"/>
    <property type="molecule type" value="Genomic_DNA"/>
</dbReference>
<dbReference type="RefSeq" id="WP_011844398.1">
    <property type="nucleotide sequence ID" value="NC_009051.1"/>
</dbReference>
<dbReference type="SMR" id="A3CVT7"/>
<dbReference type="STRING" id="368407.Memar_1558"/>
<dbReference type="GeneID" id="4847506"/>
<dbReference type="GeneID" id="76729628"/>
<dbReference type="KEGG" id="mem:Memar_1558"/>
<dbReference type="eggNOG" id="arCOG02741">
    <property type="taxonomic scope" value="Archaea"/>
</dbReference>
<dbReference type="HOGENOM" id="CLU_013181_2_2_2"/>
<dbReference type="OrthoDB" id="335406at2157"/>
<dbReference type="UniPathway" id="UPA00060"/>
<dbReference type="Proteomes" id="UP000002146">
    <property type="component" value="Chromosome"/>
</dbReference>
<dbReference type="GO" id="GO:0051539">
    <property type="term" value="F:4 iron, 4 sulfur cluster binding"/>
    <property type="evidence" value="ECO:0007669"/>
    <property type="project" value="UniProtKB-KW"/>
</dbReference>
<dbReference type="GO" id="GO:0016830">
    <property type="term" value="F:carbon-carbon lyase activity"/>
    <property type="evidence" value="ECO:0007669"/>
    <property type="project" value="InterPro"/>
</dbReference>
<dbReference type="GO" id="GO:0008270">
    <property type="term" value="F:zinc ion binding"/>
    <property type="evidence" value="ECO:0007669"/>
    <property type="project" value="UniProtKB-UniRule"/>
</dbReference>
<dbReference type="GO" id="GO:0009228">
    <property type="term" value="P:thiamine biosynthetic process"/>
    <property type="evidence" value="ECO:0007669"/>
    <property type="project" value="UniProtKB-KW"/>
</dbReference>
<dbReference type="GO" id="GO:0009229">
    <property type="term" value="P:thiamine diphosphate biosynthetic process"/>
    <property type="evidence" value="ECO:0007669"/>
    <property type="project" value="UniProtKB-UniRule"/>
</dbReference>
<dbReference type="Gene3D" id="6.10.250.620">
    <property type="match status" value="1"/>
</dbReference>
<dbReference type="Gene3D" id="3.20.20.540">
    <property type="entry name" value="Radical SAM ThiC family, central domain"/>
    <property type="match status" value="1"/>
</dbReference>
<dbReference type="HAMAP" id="MF_00089">
    <property type="entry name" value="ThiC"/>
    <property type="match status" value="1"/>
</dbReference>
<dbReference type="InterPro" id="IPR037509">
    <property type="entry name" value="ThiC"/>
</dbReference>
<dbReference type="InterPro" id="IPR038521">
    <property type="entry name" value="ThiC/Bza_core_dom"/>
</dbReference>
<dbReference type="InterPro" id="IPR002817">
    <property type="entry name" value="ThiC/BzaA/B"/>
</dbReference>
<dbReference type="NCBIfam" id="NF009895">
    <property type="entry name" value="PRK13352.1"/>
    <property type="match status" value="1"/>
</dbReference>
<dbReference type="NCBIfam" id="TIGR00190">
    <property type="entry name" value="thiC"/>
    <property type="match status" value="1"/>
</dbReference>
<dbReference type="PANTHER" id="PTHR30557:SF1">
    <property type="entry name" value="PHOSPHOMETHYLPYRIMIDINE SYNTHASE, CHLOROPLASTIC"/>
    <property type="match status" value="1"/>
</dbReference>
<dbReference type="PANTHER" id="PTHR30557">
    <property type="entry name" value="THIAMINE BIOSYNTHESIS PROTEIN THIC"/>
    <property type="match status" value="1"/>
</dbReference>
<dbReference type="Pfam" id="PF01964">
    <property type="entry name" value="ThiC_Rad_SAM"/>
    <property type="match status" value="1"/>
</dbReference>
<dbReference type="SFLD" id="SFLDF00407">
    <property type="entry name" value="phosphomethylpyrimidine_syntha"/>
    <property type="match status" value="1"/>
</dbReference>
<dbReference type="SFLD" id="SFLDG01114">
    <property type="entry name" value="phosphomethylpyrimidine_syntha"/>
    <property type="match status" value="1"/>
</dbReference>
<dbReference type="SFLD" id="SFLDS00113">
    <property type="entry name" value="Radical_SAM_Phosphomethylpyrim"/>
    <property type="match status" value="1"/>
</dbReference>
<gene>
    <name evidence="1" type="primary">thiC</name>
    <name type="ordered locus">Memar_1558</name>
</gene>
<organism>
    <name type="scientific">Methanoculleus marisnigri (strain ATCC 35101 / DSM 1498 / JR1)</name>
    <dbReference type="NCBI Taxonomy" id="368407"/>
    <lineage>
        <taxon>Archaea</taxon>
        <taxon>Methanobacteriati</taxon>
        <taxon>Methanobacteriota</taxon>
        <taxon>Stenosarchaea group</taxon>
        <taxon>Methanomicrobia</taxon>
        <taxon>Methanomicrobiales</taxon>
        <taxon>Methanomicrobiaceae</taxon>
        <taxon>Methanoculleus</taxon>
    </lineage>
</organism>